<keyword id="KW-0342">GTP-binding</keyword>
<keyword id="KW-0436">Ligase</keyword>
<keyword id="KW-0460">Magnesium</keyword>
<keyword id="KW-0479">Metal-binding</keyword>
<keyword id="KW-0547">Nucleotide-binding</keyword>
<keyword id="KW-0994">Organellar chromatophore</keyword>
<keyword id="KW-0934">Plastid</keyword>
<keyword id="KW-0658">Purine biosynthesis</keyword>
<accession>B1X5S1</accession>
<proteinExistence type="inferred from homology"/>
<sequence length="437" mass="48254">MANVVVIGAQWGDEGKGKITDLLSRSADVVVRYQGGVNAGHTIVVKDKVLKLHLIPSGILYPDTICLIGSGTVIDPKIMLSELDMLVENQIDISRLQLASTAHVTMPYHRLLDQAMEQRRGNNRIGTTGRGIGPTYSDKSERIGIRVIDILNEDKLRTRLADPLRQKNNILEKIYAISPLDFEEIIKEYIEYGNRLAPHVVDCTRVIHQAARARKNILFEGAQGTLLDLDHGTYPYVTSSHPVSGGACIGAGVGPTLIDRVIGVAKAYTTRVGEGPFPTELEGSLNDHLCSRGKEFGTTTGRRRRCGWFDGVIGRYAVDVNGLDCLAITKLDVLDELEEIKVCVAYELNNERIDYFTSNVEDFSKCKPIFETLPGWQSSTSDCRSLEELPEKAMMYLKFLAELMEVPIAIVSIGPNRDQTIIVEDPIHGPKRALLAA</sequence>
<name>PURA_PAUCH</name>
<comment type="function">
    <text evidence="1">Plays an important role in the de novo pathway and in the salvage pathway of purine nucleotide biosynthesis. Catalyzes the first committed step in the biosynthesis of AMP from IMP (By similarity).</text>
</comment>
<comment type="catalytic activity">
    <reaction evidence="2">
        <text>IMP + L-aspartate + GTP = N(6)-(1,2-dicarboxyethyl)-AMP + GDP + phosphate + 2 H(+)</text>
        <dbReference type="Rhea" id="RHEA:15753"/>
        <dbReference type="ChEBI" id="CHEBI:15378"/>
        <dbReference type="ChEBI" id="CHEBI:29991"/>
        <dbReference type="ChEBI" id="CHEBI:37565"/>
        <dbReference type="ChEBI" id="CHEBI:43474"/>
        <dbReference type="ChEBI" id="CHEBI:57567"/>
        <dbReference type="ChEBI" id="CHEBI:58053"/>
        <dbReference type="ChEBI" id="CHEBI:58189"/>
        <dbReference type="EC" id="6.3.4.4"/>
    </reaction>
</comment>
<comment type="cofactor">
    <cofactor evidence="2">
        <name>Mg(2+)</name>
        <dbReference type="ChEBI" id="CHEBI:18420"/>
    </cofactor>
    <text evidence="2">Binds 1 Mg(2+) ion per subunit.</text>
</comment>
<comment type="pathway">
    <text evidence="2">Purine metabolism; AMP biosynthesis via de novo pathway; AMP from IMP: step 1/2.</text>
</comment>
<comment type="subunit">
    <text evidence="2">Homodimer.</text>
</comment>
<comment type="subcellular location">
    <subcellularLocation>
        <location>Plastid</location>
        <location>Organellar chromatophore</location>
    </subcellularLocation>
</comment>
<comment type="similarity">
    <text evidence="2">Belongs to the adenylosuccinate synthetase family.</text>
</comment>
<geneLocation type="organellar chromatophore"/>
<gene>
    <name type="ordered locus">PCC_0881</name>
</gene>
<evidence type="ECO:0000250" key="1"/>
<evidence type="ECO:0000255" key="2">
    <source>
        <dbReference type="HAMAP-Rule" id="MF_03125"/>
    </source>
</evidence>
<reference key="1">
    <citation type="journal article" date="2008" name="Curr. Biol.">
        <title>Chromatophore genome sequence of Paulinella sheds light on acquisition of photosynthesis by eukaryotes.</title>
        <authorList>
            <person name="Nowack E.C.M."/>
            <person name="Melkonian M."/>
            <person name="Gloeckner G."/>
        </authorList>
    </citation>
    <scope>NUCLEOTIDE SEQUENCE [LARGE SCALE GENOMIC DNA]</scope>
</reference>
<organism>
    <name type="scientific">Paulinella chromatophora</name>
    <dbReference type="NCBI Taxonomy" id="39717"/>
    <lineage>
        <taxon>Eukaryota</taxon>
        <taxon>Sar</taxon>
        <taxon>Rhizaria</taxon>
        <taxon>Cercozoa</taxon>
        <taxon>Imbricatea</taxon>
        <taxon>Silicofilosea</taxon>
        <taxon>Euglyphida</taxon>
        <taxon>Paulinellidae</taxon>
        <taxon>Paulinella</taxon>
    </lineage>
</organism>
<protein>
    <recommendedName>
        <fullName evidence="2">Adenylosuccinate synthetase, organellar chromatophore</fullName>
        <shortName evidence="2">AMPSase</shortName>
        <shortName evidence="2">AdSS</shortName>
        <ecNumber evidence="2">6.3.4.4</ecNumber>
    </recommendedName>
    <alternativeName>
        <fullName evidence="2">IMP--aspartate ligase</fullName>
    </alternativeName>
</protein>
<dbReference type="EC" id="6.3.4.4" evidence="2"/>
<dbReference type="EMBL" id="CP000815">
    <property type="protein sequence ID" value="ACB43290.1"/>
    <property type="molecule type" value="Genomic_DNA"/>
</dbReference>
<dbReference type="SMR" id="B1X5S1"/>
<dbReference type="UniPathway" id="UPA00075">
    <property type="reaction ID" value="UER00335"/>
</dbReference>
<dbReference type="GO" id="GO:0070111">
    <property type="term" value="C:organellar chromatophore"/>
    <property type="evidence" value="ECO:0007669"/>
    <property type="project" value="UniProtKB-SubCell"/>
</dbReference>
<dbReference type="GO" id="GO:0009536">
    <property type="term" value="C:plastid"/>
    <property type="evidence" value="ECO:0007669"/>
    <property type="project" value="UniProtKB-KW"/>
</dbReference>
<dbReference type="GO" id="GO:0004019">
    <property type="term" value="F:adenylosuccinate synthase activity"/>
    <property type="evidence" value="ECO:0007669"/>
    <property type="project" value="UniProtKB-UniRule"/>
</dbReference>
<dbReference type="GO" id="GO:0005525">
    <property type="term" value="F:GTP binding"/>
    <property type="evidence" value="ECO:0007669"/>
    <property type="project" value="UniProtKB-UniRule"/>
</dbReference>
<dbReference type="GO" id="GO:0000287">
    <property type="term" value="F:magnesium ion binding"/>
    <property type="evidence" value="ECO:0007669"/>
    <property type="project" value="UniProtKB-UniRule"/>
</dbReference>
<dbReference type="GO" id="GO:0044208">
    <property type="term" value="P:'de novo' AMP biosynthetic process"/>
    <property type="evidence" value="ECO:0007669"/>
    <property type="project" value="UniProtKB-UniRule"/>
</dbReference>
<dbReference type="GO" id="GO:0046040">
    <property type="term" value="P:IMP metabolic process"/>
    <property type="evidence" value="ECO:0007669"/>
    <property type="project" value="TreeGrafter"/>
</dbReference>
<dbReference type="CDD" id="cd03108">
    <property type="entry name" value="AdSS"/>
    <property type="match status" value="1"/>
</dbReference>
<dbReference type="FunFam" id="1.10.300.10:FF:000001">
    <property type="entry name" value="Adenylosuccinate synthetase"/>
    <property type="match status" value="1"/>
</dbReference>
<dbReference type="FunFam" id="3.90.170.10:FF:000001">
    <property type="entry name" value="Adenylosuccinate synthetase"/>
    <property type="match status" value="1"/>
</dbReference>
<dbReference type="Gene3D" id="3.40.440.10">
    <property type="entry name" value="Adenylosuccinate Synthetase, subunit A, domain 1"/>
    <property type="match status" value="1"/>
</dbReference>
<dbReference type="Gene3D" id="1.10.300.10">
    <property type="entry name" value="Adenylosuccinate Synthetase, subunit A, domain 2"/>
    <property type="match status" value="1"/>
</dbReference>
<dbReference type="Gene3D" id="3.90.170.10">
    <property type="entry name" value="Adenylosuccinate Synthetase, subunit A, domain 3"/>
    <property type="match status" value="1"/>
</dbReference>
<dbReference type="HAMAP" id="MF_00011">
    <property type="entry name" value="Adenylosucc_synth"/>
    <property type="match status" value="1"/>
</dbReference>
<dbReference type="InterPro" id="IPR018220">
    <property type="entry name" value="Adenylosuccin_syn_GTP-bd"/>
</dbReference>
<dbReference type="InterPro" id="IPR033128">
    <property type="entry name" value="Adenylosuccin_syn_Lys_AS"/>
</dbReference>
<dbReference type="InterPro" id="IPR042109">
    <property type="entry name" value="Adenylosuccinate_synth_dom1"/>
</dbReference>
<dbReference type="InterPro" id="IPR042110">
    <property type="entry name" value="Adenylosuccinate_synth_dom2"/>
</dbReference>
<dbReference type="InterPro" id="IPR042111">
    <property type="entry name" value="Adenylosuccinate_synth_dom3"/>
</dbReference>
<dbReference type="InterPro" id="IPR001114">
    <property type="entry name" value="Adenylosuccinate_synthetase"/>
</dbReference>
<dbReference type="InterPro" id="IPR027417">
    <property type="entry name" value="P-loop_NTPase"/>
</dbReference>
<dbReference type="NCBIfam" id="NF002223">
    <property type="entry name" value="PRK01117.1"/>
    <property type="match status" value="1"/>
</dbReference>
<dbReference type="NCBIfam" id="TIGR00184">
    <property type="entry name" value="purA"/>
    <property type="match status" value="1"/>
</dbReference>
<dbReference type="PANTHER" id="PTHR11846">
    <property type="entry name" value="ADENYLOSUCCINATE SYNTHETASE"/>
    <property type="match status" value="1"/>
</dbReference>
<dbReference type="PANTHER" id="PTHR11846:SF0">
    <property type="entry name" value="ADENYLOSUCCINATE SYNTHETASE"/>
    <property type="match status" value="1"/>
</dbReference>
<dbReference type="Pfam" id="PF00709">
    <property type="entry name" value="Adenylsucc_synt"/>
    <property type="match status" value="1"/>
</dbReference>
<dbReference type="SMART" id="SM00788">
    <property type="entry name" value="Adenylsucc_synt"/>
    <property type="match status" value="1"/>
</dbReference>
<dbReference type="SUPFAM" id="SSF52540">
    <property type="entry name" value="P-loop containing nucleoside triphosphate hydrolases"/>
    <property type="match status" value="1"/>
</dbReference>
<dbReference type="PROSITE" id="PS01266">
    <property type="entry name" value="ADENYLOSUCCIN_SYN_1"/>
    <property type="match status" value="1"/>
</dbReference>
<dbReference type="PROSITE" id="PS00513">
    <property type="entry name" value="ADENYLOSUCCIN_SYN_2"/>
    <property type="match status" value="1"/>
</dbReference>
<feature type="chain" id="PRO_0000399300" description="Adenylosuccinate synthetase, organellar chromatophore">
    <location>
        <begin position="1"/>
        <end position="437"/>
    </location>
</feature>
<feature type="active site" description="Proton acceptor" evidence="2">
    <location>
        <position position="13"/>
    </location>
</feature>
<feature type="active site" description="Proton donor" evidence="2">
    <location>
        <position position="41"/>
    </location>
</feature>
<feature type="binding site" evidence="2">
    <location>
        <begin position="12"/>
        <end position="18"/>
    </location>
    <ligand>
        <name>GTP</name>
        <dbReference type="ChEBI" id="CHEBI:37565"/>
    </ligand>
</feature>
<feature type="binding site" description="in other chain" evidence="2">
    <location>
        <begin position="13"/>
        <end position="16"/>
    </location>
    <ligand>
        <name>IMP</name>
        <dbReference type="ChEBI" id="CHEBI:58053"/>
        <note>ligand shared between dimeric partners</note>
    </ligand>
</feature>
<feature type="binding site" evidence="2">
    <location>
        <position position="13"/>
    </location>
    <ligand>
        <name>Mg(2+)</name>
        <dbReference type="ChEBI" id="CHEBI:18420"/>
    </ligand>
</feature>
<feature type="binding site" description="in other chain" evidence="2">
    <location>
        <begin position="38"/>
        <end position="41"/>
    </location>
    <ligand>
        <name>IMP</name>
        <dbReference type="ChEBI" id="CHEBI:58053"/>
        <note>ligand shared between dimeric partners</note>
    </ligand>
</feature>
<feature type="binding site" evidence="2">
    <location>
        <begin position="40"/>
        <end position="42"/>
    </location>
    <ligand>
        <name>GTP</name>
        <dbReference type="ChEBI" id="CHEBI:37565"/>
    </ligand>
</feature>
<feature type="binding site" evidence="2">
    <location>
        <position position="40"/>
    </location>
    <ligand>
        <name>Mg(2+)</name>
        <dbReference type="ChEBI" id="CHEBI:18420"/>
    </ligand>
</feature>
<feature type="binding site" description="in other chain" evidence="2">
    <location>
        <position position="128"/>
    </location>
    <ligand>
        <name>IMP</name>
        <dbReference type="ChEBI" id="CHEBI:58053"/>
        <note>ligand shared between dimeric partners</note>
    </ligand>
</feature>
<feature type="binding site" evidence="2">
    <location>
        <position position="142"/>
    </location>
    <ligand>
        <name>IMP</name>
        <dbReference type="ChEBI" id="CHEBI:58053"/>
        <note>ligand shared between dimeric partners</note>
    </ligand>
</feature>
<feature type="binding site" description="in other chain" evidence="2">
    <location>
        <position position="223"/>
    </location>
    <ligand>
        <name>IMP</name>
        <dbReference type="ChEBI" id="CHEBI:58053"/>
        <note>ligand shared between dimeric partners</note>
    </ligand>
</feature>
<feature type="binding site" description="in other chain" evidence="2">
    <location>
        <position position="238"/>
    </location>
    <ligand>
        <name>IMP</name>
        <dbReference type="ChEBI" id="CHEBI:58053"/>
        <note>ligand shared between dimeric partners</note>
    </ligand>
</feature>
<feature type="binding site" evidence="2">
    <location>
        <begin position="298"/>
        <end position="304"/>
    </location>
    <ligand>
        <name>substrate</name>
    </ligand>
</feature>
<feature type="binding site" description="in other chain" evidence="2">
    <location>
        <position position="302"/>
    </location>
    <ligand>
        <name>IMP</name>
        <dbReference type="ChEBI" id="CHEBI:58053"/>
        <note>ligand shared between dimeric partners</note>
    </ligand>
</feature>
<feature type="binding site" evidence="2">
    <location>
        <position position="304"/>
    </location>
    <ligand>
        <name>GTP</name>
        <dbReference type="ChEBI" id="CHEBI:37565"/>
    </ligand>
</feature>
<feature type="binding site" evidence="2">
    <location>
        <begin position="330"/>
        <end position="332"/>
    </location>
    <ligand>
        <name>GTP</name>
        <dbReference type="ChEBI" id="CHEBI:37565"/>
    </ligand>
</feature>